<sequence>MLIFFEGIDGVGKSTQIELLKSVYNKNYLITKEPGGTLLGEKLREILLESDFKISKTAELFLFLADRAEHFEKVLKFSDKKDIICDRSFVSGIAYALANEQNLDINDLINLNKIALGGKIPNAKFIFLKISKDNLRFRLENRGNFDKIEERGLEYLMKVQKNMSEIFKILKIDALEIDANGDINEIHKKIKEFVK</sequence>
<name>KTHY_CAMHC</name>
<keyword id="KW-0067">ATP-binding</keyword>
<keyword id="KW-0418">Kinase</keyword>
<keyword id="KW-0545">Nucleotide biosynthesis</keyword>
<keyword id="KW-0547">Nucleotide-binding</keyword>
<keyword id="KW-1185">Reference proteome</keyword>
<keyword id="KW-0808">Transferase</keyword>
<reference key="1">
    <citation type="submission" date="2007-07" db="EMBL/GenBank/DDBJ databases">
        <title>Complete genome sequence of Campylobacter hominis ATCC BAA-381, a commensal isolated from the human gastrointestinal tract.</title>
        <authorList>
            <person name="Fouts D.E."/>
            <person name="Mongodin E.F."/>
            <person name="Puiu D."/>
            <person name="Sebastian Y."/>
            <person name="Miller W.G."/>
            <person name="Mandrell R.E."/>
            <person name="Nelson K.E."/>
        </authorList>
    </citation>
    <scope>NUCLEOTIDE SEQUENCE [LARGE SCALE GENOMIC DNA]</scope>
    <source>
        <strain>ATCC BAA-381 / DSM 21671 / CCUG 45161 / LMG 19568 / NCTC 13146 / CH001A</strain>
    </source>
</reference>
<organism>
    <name type="scientific">Campylobacter hominis (strain ATCC BAA-381 / DSM 21671 / CCUG 45161 / LMG 19568 / NCTC 13146 / CH001A)</name>
    <dbReference type="NCBI Taxonomy" id="360107"/>
    <lineage>
        <taxon>Bacteria</taxon>
        <taxon>Pseudomonadati</taxon>
        <taxon>Campylobacterota</taxon>
        <taxon>Epsilonproteobacteria</taxon>
        <taxon>Campylobacterales</taxon>
        <taxon>Campylobacteraceae</taxon>
        <taxon>Campylobacter</taxon>
    </lineage>
</organism>
<gene>
    <name evidence="1" type="primary">tmk</name>
    <name type="ordered locus">CHAB381_0924</name>
</gene>
<protein>
    <recommendedName>
        <fullName evidence="1">Thymidylate kinase</fullName>
        <ecNumber evidence="1">2.7.4.9</ecNumber>
    </recommendedName>
    <alternativeName>
        <fullName evidence="1">dTMP kinase</fullName>
    </alternativeName>
</protein>
<proteinExistence type="inferred from homology"/>
<evidence type="ECO:0000255" key="1">
    <source>
        <dbReference type="HAMAP-Rule" id="MF_00165"/>
    </source>
</evidence>
<dbReference type="EC" id="2.7.4.9" evidence="1"/>
<dbReference type="EMBL" id="CP000776">
    <property type="protein sequence ID" value="ABS51260.1"/>
    <property type="molecule type" value="Genomic_DNA"/>
</dbReference>
<dbReference type="RefSeq" id="WP_012108777.1">
    <property type="nucleotide sequence ID" value="NC_009714.1"/>
</dbReference>
<dbReference type="SMR" id="A7I1U4"/>
<dbReference type="STRING" id="360107.CHAB381_0924"/>
<dbReference type="KEGG" id="cha:CHAB381_0924"/>
<dbReference type="eggNOG" id="COG0125">
    <property type="taxonomic scope" value="Bacteria"/>
</dbReference>
<dbReference type="HOGENOM" id="CLU_049131_0_0_7"/>
<dbReference type="OrthoDB" id="9774907at2"/>
<dbReference type="Proteomes" id="UP000002407">
    <property type="component" value="Chromosome"/>
</dbReference>
<dbReference type="GO" id="GO:0005829">
    <property type="term" value="C:cytosol"/>
    <property type="evidence" value="ECO:0007669"/>
    <property type="project" value="TreeGrafter"/>
</dbReference>
<dbReference type="GO" id="GO:0005524">
    <property type="term" value="F:ATP binding"/>
    <property type="evidence" value="ECO:0007669"/>
    <property type="project" value="UniProtKB-UniRule"/>
</dbReference>
<dbReference type="GO" id="GO:0004798">
    <property type="term" value="F:dTMP kinase activity"/>
    <property type="evidence" value="ECO:0007669"/>
    <property type="project" value="UniProtKB-UniRule"/>
</dbReference>
<dbReference type="GO" id="GO:0006233">
    <property type="term" value="P:dTDP biosynthetic process"/>
    <property type="evidence" value="ECO:0007669"/>
    <property type="project" value="InterPro"/>
</dbReference>
<dbReference type="GO" id="GO:0006235">
    <property type="term" value="P:dTTP biosynthetic process"/>
    <property type="evidence" value="ECO:0007669"/>
    <property type="project" value="UniProtKB-UniRule"/>
</dbReference>
<dbReference type="GO" id="GO:0006227">
    <property type="term" value="P:dUDP biosynthetic process"/>
    <property type="evidence" value="ECO:0007669"/>
    <property type="project" value="TreeGrafter"/>
</dbReference>
<dbReference type="CDD" id="cd01672">
    <property type="entry name" value="TMPK"/>
    <property type="match status" value="1"/>
</dbReference>
<dbReference type="Gene3D" id="3.40.50.300">
    <property type="entry name" value="P-loop containing nucleotide triphosphate hydrolases"/>
    <property type="match status" value="1"/>
</dbReference>
<dbReference type="HAMAP" id="MF_00165">
    <property type="entry name" value="Thymidylate_kinase"/>
    <property type="match status" value="1"/>
</dbReference>
<dbReference type="InterPro" id="IPR027417">
    <property type="entry name" value="P-loop_NTPase"/>
</dbReference>
<dbReference type="InterPro" id="IPR039430">
    <property type="entry name" value="Thymidylate_kin-like_dom"/>
</dbReference>
<dbReference type="InterPro" id="IPR018094">
    <property type="entry name" value="Thymidylate_kinase"/>
</dbReference>
<dbReference type="NCBIfam" id="TIGR00041">
    <property type="entry name" value="DTMP_kinase"/>
    <property type="match status" value="1"/>
</dbReference>
<dbReference type="PANTHER" id="PTHR10344">
    <property type="entry name" value="THYMIDYLATE KINASE"/>
    <property type="match status" value="1"/>
</dbReference>
<dbReference type="PANTHER" id="PTHR10344:SF4">
    <property type="entry name" value="UMP-CMP KINASE 2, MITOCHONDRIAL"/>
    <property type="match status" value="1"/>
</dbReference>
<dbReference type="Pfam" id="PF02223">
    <property type="entry name" value="Thymidylate_kin"/>
    <property type="match status" value="1"/>
</dbReference>
<dbReference type="SUPFAM" id="SSF52540">
    <property type="entry name" value="P-loop containing nucleoside triphosphate hydrolases"/>
    <property type="match status" value="1"/>
</dbReference>
<dbReference type="PROSITE" id="PS01331">
    <property type="entry name" value="THYMIDYLATE_KINASE"/>
    <property type="match status" value="1"/>
</dbReference>
<feature type="chain" id="PRO_1000023169" description="Thymidylate kinase">
    <location>
        <begin position="1"/>
        <end position="195"/>
    </location>
</feature>
<feature type="binding site" evidence="1">
    <location>
        <begin position="7"/>
        <end position="14"/>
    </location>
    <ligand>
        <name>ATP</name>
        <dbReference type="ChEBI" id="CHEBI:30616"/>
    </ligand>
</feature>
<accession>A7I1U4</accession>
<comment type="function">
    <text evidence="1">Phosphorylation of dTMP to form dTDP in both de novo and salvage pathways of dTTP synthesis.</text>
</comment>
<comment type="catalytic activity">
    <reaction evidence="1">
        <text>dTMP + ATP = dTDP + ADP</text>
        <dbReference type="Rhea" id="RHEA:13517"/>
        <dbReference type="ChEBI" id="CHEBI:30616"/>
        <dbReference type="ChEBI" id="CHEBI:58369"/>
        <dbReference type="ChEBI" id="CHEBI:63528"/>
        <dbReference type="ChEBI" id="CHEBI:456216"/>
        <dbReference type="EC" id="2.7.4.9"/>
    </reaction>
</comment>
<comment type="similarity">
    <text evidence="1">Belongs to the thymidylate kinase family.</text>
</comment>